<dbReference type="EMBL" id="DQ126104">
    <property type="protein sequence ID" value="AAZ94044.1"/>
    <property type="molecule type" value="Genomic_RNA"/>
</dbReference>
<dbReference type="RefSeq" id="YP_654547.1">
    <property type="nucleotide sequence ID" value="NC_008174.1"/>
</dbReference>
<dbReference type="KEGG" id="vg:5076666"/>
<dbReference type="Proteomes" id="UP000000349">
    <property type="component" value="Genome"/>
</dbReference>
<organism>
    <name type="scientific">Micromonas pusilla reovirus (isolate Netherlands/2005)</name>
    <name type="common">MpRV</name>
    <dbReference type="NCBI Taxonomy" id="649596"/>
    <lineage>
        <taxon>Viruses</taxon>
        <taxon>Riboviria</taxon>
        <taxon>Orthornavirae</taxon>
        <taxon>Duplornaviricota</taxon>
        <taxon>Resentoviricetes</taxon>
        <taxon>Reovirales</taxon>
        <taxon>Sedoreoviridae</taxon>
        <taxon>Mimoreovirus</taxon>
        <taxon>Micromonas pusilla reovirus</taxon>
    </lineage>
</organism>
<gene>
    <name type="primary">S4</name>
</gene>
<accession>Q1I0U8</accession>
<protein>
    <recommendedName>
        <fullName>Uncharacterized protein VP4</fullName>
    </recommendedName>
</protein>
<name>VP4_MPRVN</name>
<sequence length="916" mass="102641">MNRSQVEYQSEIVPDPLEQQIPEQLFEGLQVAENAVALTADTFSPDVFGALVSRFLTVFTDESNTPQGYYPIWDGYETNNLGNPGVFSGFINSILVAGTGNPNFHSDITDLLGDTGPGISSEHGYLLPGYGTRITRRQPIPLDMLEHARGTLVEARTSYGQDGRGPTYQSGNQSYVSALRSMFTGDVASSLIADERGGGHISGALANGLFNVAPVVYKTSEIGDTDTFKRRVSNAPSIGDIKLVINGQSGPDLKSEKDRIYQIPDDDRYVTKITSHCDLDDRKLIVEKVKLNVPRRIKISAHAKADYNTIVADSLRTALVAAFNGKVYDCLQLRSSEDHGPGVVIENMPLHEYPHKSMTLSGETTITAKARDEFVNVKFDTKSTSGTISIPITKMKFVFAGIMKYDPKSATYTYSATNVVTNIFDGDVGVARLRRSPIRVNKRSYDYNDDRNFRPESLKAEISMPYDRRNSGAVIHGLHNVLERYDLERKLETHDPWTGLPFSNSIMSPPGEDDNLLRYSGIEYDDIHAIYTSPSTFNGTILGLTSPSGKEIVERVADMCLHMLLSQHEVDLYGRDIIASTKLSDPKLSQAIKLIKARLQREIYDKSAITSMHDKLWFTNVNESVAPDDRIVVDIMLARYLLSLTHHIVYPISEDTYRSTLLLPPRINKAKYIPVSLSEEGYRVVTPTLSVVYSYFMKEPGSRQLLKQYISKDGNFKQDPQNKLDWLSAINRYEPRNFKELVNNSTQGRIELHAIVRAPLVEVTYESVLDGTYTHCIICDNCKIITLDYLIQSTVYQLCTKSESMDGVQSVLSKVHNNGGKLFVIYDKWFILLFVIPEKTDVPPIVFVQTSTRAARIVPHTKNTNSSLRRADAKYDYEVLMQSAVSCDLLYMSKTIEWSSGRRVGQLLRDRSVKYA</sequence>
<reference key="1">
    <citation type="journal article" date="2006" name="J. Gen. Virol.">
        <title>Micromonas pusilla reovirus: a new member of the family Reoviridae assigned to a novel proposed genus (Mimoreovirus).</title>
        <authorList>
            <person name="Attoui H."/>
            <person name="Jaafar F.M."/>
            <person name="Belhouchet M."/>
            <person name="de Micco P."/>
            <person name="de Lamballerie X."/>
            <person name="Brussaard C.P."/>
        </authorList>
    </citation>
    <scope>NUCLEOTIDE SEQUENCE [GENOMIC RNA]</scope>
</reference>
<proteinExistence type="predicted"/>
<keyword id="KW-1185">Reference proteome</keyword>
<feature type="chain" id="PRO_0000404164" description="Uncharacterized protein VP4">
    <location>
        <begin position="1"/>
        <end position="916"/>
    </location>
</feature>
<organismHost>
    <name type="scientific">Micromonas pusilla</name>
    <name type="common">Picoplanktonic green alga</name>
    <name type="synonym">Chromulina pusilla</name>
    <dbReference type="NCBI Taxonomy" id="38833"/>
</organismHost>